<reference key="1">
    <citation type="journal article" date="1995" name="Science">
        <title>Whole-genome random sequencing and assembly of Haemophilus influenzae Rd.</title>
        <authorList>
            <person name="Fleischmann R.D."/>
            <person name="Adams M.D."/>
            <person name="White O."/>
            <person name="Clayton R.A."/>
            <person name="Kirkness E.F."/>
            <person name="Kerlavage A.R."/>
            <person name="Bult C.J."/>
            <person name="Tomb J.-F."/>
            <person name="Dougherty B.A."/>
            <person name="Merrick J.M."/>
            <person name="McKenney K."/>
            <person name="Sutton G.G."/>
            <person name="FitzHugh W."/>
            <person name="Fields C.A."/>
            <person name="Gocayne J.D."/>
            <person name="Scott J.D."/>
            <person name="Shirley R."/>
            <person name="Liu L.-I."/>
            <person name="Glodek A."/>
            <person name="Kelley J.M."/>
            <person name="Weidman J.F."/>
            <person name="Phillips C.A."/>
            <person name="Spriggs T."/>
            <person name="Hedblom E."/>
            <person name="Cotton M.D."/>
            <person name="Utterback T.R."/>
            <person name="Hanna M.C."/>
            <person name="Nguyen D.T."/>
            <person name="Saudek D.M."/>
            <person name="Brandon R.C."/>
            <person name="Fine L.D."/>
            <person name="Fritchman J.L."/>
            <person name="Fuhrmann J.L."/>
            <person name="Geoghagen N.S.M."/>
            <person name="Gnehm C.L."/>
            <person name="McDonald L.A."/>
            <person name="Small K.V."/>
            <person name="Fraser C.M."/>
            <person name="Smith H.O."/>
            <person name="Venter J.C."/>
        </authorList>
    </citation>
    <scope>NUCLEOTIDE SEQUENCE [LARGE SCALE GENOMIC DNA]</scope>
    <source>
        <strain>ATCC 51907 / DSM 11121 / KW20 / Rd</strain>
    </source>
</reference>
<reference key="2">
    <citation type="journal article" date="2003" name="J. Bacteriol.">
        <title>The crystal structure of shikimate dehydrogenase (AroE) reveals a unique NADPH binding mode.</title>
        <authorList>
            <person name="Ye S."/>
            <person name="Von Delft F."/>
            <person name="Brooun A."/>
            <person name="Knuth M.W."/>
            <person name="Swanson R.V."/>
            <person name="McRee D.E."/>
        </authorList>
    </citation>
    <scope>X-RAY CRYSTALLOGRAPHY (1.95 ANGSTROMS) IN COMPLEX WITH NADP</scope>
    <scope>SUBUNIT</scope>
    <source>
        <strain>ATCC 51907 / DSM 11121 / KW20 / Rd</strain>
    </source>
</reference>
<sequence>MDLYAVWGNPIAQSKSPLIQNKLAAQTHQTMEYIAKLGDLDAFEQQLLAFFEEGAKGCNITSPFKERAYQLADEYSQRAKLAEACNTLKKLDDGKLYADNTDGIGLVTDLQRLNWLRPNQHVLILGAGGATKGVLLPLLQAQQNIVLANRTFSKTKELAERFQPYGNIQAVSMDSIPLQTYDLVINATSAGLSGGTASVDAEILKLGSAFYDMQYAKGTDTPFIALCKSLGLTNVSDGFGMLVAQAAHSFHLWRGVMPDFVSVYEQLKKAML</sequence>
<proteinExistence type="evidence at protein level"/>
<evidence type="ECO:0000255" key="1">
    <source>
        <dbReference type="HAMAP-Rule" id="MF_00222"/>
    </source>
</evidence>
<evidence type="ECO:0000269" key="2">
    <source>
    </source>
</evidence>
<evidence type="ECO:0000312" key="3">
    <source>
        <dbReference type="EMBL" id="AAC22314.1"/>
    </source>
</evidence>
<evidence type="ECO:0007829" key="4">
    <source>
        <dbReference type="PDB" id="1P74"/>
    </source>
</evidence>
<evidence type="ECO:0007829" key="5">
    <source>
        <dbReference type="PDB" id="1P77"/>
    </source>
</evidence>
<gene>
    <name evidence="1" type="primary">aroE</name>
    <name evidence="3" type="ordered locus">HI_0655</name>
</gene>
<name>AROE_HAEIN</name>
<comment type="function">
    <text evidence="1">Involved in the biosynthesis of the chorismate, which leads to the biosynthesis of aromatic amino acids. Catalyzes the reversible NADPH linked reduction of 3-dehydroshikimate (DHSA) to yield shikimate (SA).</text>
</comment>
<comment type="catalytic activity">
    <reaction evidence="1">
        <text>shikimate + NADP(+) = 3-dehydroshikimate + NADPH + H(+)</text>
        <dbReference type="Rhea" id="RHEA:17737"/>
        <dbReference type="ChEBI" id="CHEBI:15378"/>
        <dbReference type="ChEBI" id="CHEBI:16630"/>
        <dbReference type="ChEBI" id="CHEBI:36208"/>
        <dbReference type="ChEBI" id="CHEBI:57783"/>
        <dbReference type="ChEBI" id="CHEBI:58349"/>
        <dbReference type="EC" id="1.1.1.25"/>
    </reaction>
</comment>
<comment type="pathway">
    <text evidence="1">Metabolic intermediate biosynthesis; chorismate biosynthesis; chorismate from D-erythrose 4-phosphate and phosphoenolpyruvate: step 4/7.</text>
</comment>
<comment type="subunit">
    <text evidence="1 2">Homodimer.</text>
</comment>
<comment type="similarity">
    <text evidence="1">Belongs to the shikimate dehydrogenase family.</text>
</comment>
<organism>
    <name type="scientific">Haemophilus influenzae (strain ATCC 51907 / DSM 11121 / KW20 / Rd)</name>
    <dbReference type="NCBI Taxonomy" id="71421"/>
    <lineage>
        <taxon>Bacteria</taxon>
        <taxon>Pseudomonadati</taxon>
        <taxon>Pseudomonadota</taxon>
        <taxon>Gammaproteobacteria</taxon>
        <taxon>Pasteurellales</taxon>
        <taxon>Pasteurellaceae</taxon>
        <taxon>Haemophilus</taxon>
    </lineage>
</organism>
<accession>P43876</accession>
<feature type="chain" id="PRO_0000136006" description="Shikimate dehydrogenase (NADP(+))">
    <location>
        <begin position="1"/>
        <end position="272"/>
    </location>
</feature>
<feature type="active site" description="Proton acceptor" evidence="1">
    <location>
        <position position="65"/>
    </location>
</feature>
<feature type="binding site" evidence="1">
    <location>
        <begin position="14"/>
        <end position="16"/>
    </location>
    <ligand>
        <name>shikimate</name>
        <dbReference type="ChEBI" id="CHEBI:36208"/>
    </ligand>
</feature>
<feature type="binding site" evidence="1">
    <location>
        <position position="61"/>
    </location>
    <ligand>
        <name>shikimate</name>
        <dbReference type="ChEBI" id="CHEBI:36208"/>
    </ligand>
</feature>
<feature type="binding site" evidence="1">
    <location>
        <position position="86"/>
    </location>
    <ligand>
        <name>shikimate</name>
        <dbReference type="ChEBI" id="CHEBI:36208"/>
    </ligand>
</feature>
<feature type="binding site" evidence="1">
    <location>
        <position position="102"/>
    </location>
    <ligand>
        <name>shikimate</name>
        <dbReference type="ChEBI" id="CHEBI:36208"/>
    </ligand>
</feature>
<feature type="binding site" evidence="1 2">
    <location>
        <begin position="126"/>
        <end position="130"/>
    </location>
    <ligand>
        <name>NADP(+)</name>
        <dbReference type="ChEBI" id="CHEBI:58349"/>
    </ligand>
</feature>
<feature type="binding site" evidence="1 2">
    <location>
        <begin position="149"/>
        <end position="154"/>
    </location>
    <ligand>
        <name>NADP(+)</name>
        <dbReference type="ChEBI" id="CHEBI:58349"/>
    </ligand>
</feature>
<feature type="binding site" evidence="2">
    <location>
        <position position="189"/>
    </location>
    <ligand>
        <name>NADP(+)</name>
        <dbReference type="ChEBI" id="CHEBI:58349"/>
    </ligand>
</feature>
<feature type="binding site" evidence="1">
    <location>
        <position position="213"/>
    </location>
    <ligand>
        <name>NADP(+)</name>
        <dbReference type="ChEBI" id="CHEBI:58349"/>
    </ligand>
</feature>
<feature type="binding site" evidence="1">
    <location>
        <position position="215"/>
    </location>
    <ligand>
        <name>shikimate</name>
        <dbReference type="ChEBI" id="CHEBI:36208"/>
    </ligand>
</feature>
<feature type="binding site" evidence="1">
    <location>
        <position position="238"/>
    </location>
    <ligand>
        <name>NADP(+)</name>
        <dbReference type="ChEBI" id="CHEBI:58349"/>
    </ligand>
</feature>
<feature type="strand" evidence="5">
    <location>
        <begin position="2"/>
        <end position="10"/>
    </location>
</feature>
<feature type="helix" evidence="5">
    <location>
        <begin position="16"/>
        <end position="26"/>
    </location>
</feature>
<feature type="strand" evidence="5">
    <location>
        <begin position="31"/>
        <end position="37"/>
    </location>
</feature>
<feature type="turn" evidence="5">
    <location>
        <begin position="40"/>
        <end position="42"/>
    </location>
</feature>
<feature type="helix" evidence="5">
    <location>
        <begin position="43"/>
        <end position="52"/>
    </location>
</feature>
<feature type="strand" evidence="5">
    <location>
        <begin position="57"/>
        <end position="60"/>
    </location>
</feature>
<feature type="helix" evidence="5">
    <location>
        <begin position="65"/>
        <end position="71"/>
    </location>
</feature>
<feature type="strand" evidence="5">
    <location>
        <begin position="73"/>
        <end position="75"/>
    </location>
</feature>
<feature type="helix" evidence="5">
    <location>
        <begin position="77"/>
        <end position="82"/>
    </location>
</feature>
<feature type="strand" evidence="5">
    <location>
        <begin position="86"/>
        <end position="90"/>
    </location>
</feature>
<feature type="strand" evidence="4">
    <location>
        <begin position="92"/>
        <end position="94"/>
    </location>
</feature>
<feature type="strand" evidence="5">
    <location>
        <begin position="96"/>
        <end position="99"/>
    </location>
</feature>
<feature type="helix" evidence="5">
    <location>
        <begin position="102"/>
        <end position="112"/>
    </location>
</feature>
<feature type="strand" evidence="5">
    <location>
        <begin position="121"/>
        <end position="125"/>
    </location>
</feature>
<feature type="helix" evidence="5">
    <location>
        <begin position="129"/>
        <end position="132"/>
    </location>
</feature>
<feature type="helix" evidence="5">
    <location>
        <begin position="135"/>
        <end position="140"/>
    </location>
</feature>
<feature type="strand" evidence="5">
    <location>
        <begin position="144"/>
        <end position="151"/>
    </location>
</feature>
<feature type="helix" evidence="5">
    <location>
        <begin position="152"/>
        <end position="162"/>
    </location>
</feature>
<feature type="helix" evidence="5">
    <location>
        <begin position="163"/>
        <end position="165"/>
    </location>
</feature>
<feature type="strand" evidence="5">
    <location>
        <begin position="168"/>
        <end position="172"/>
    </location>
</feature>
<feature type="helix" evidence="5">
    <location>
        <begin position="173"/>
        <end position="175"/>
    </location>
</feature>
<feature type="strand" evidence="5">
    <location>
        <begin position="182"/>
        <end position="186"/>
    </location>
</feature>
<feature type="helix" evidence="5">
    <location>
        <begin position="201"/>
        <end position="206"/>
    </location>
</feature>
<feature type="strand" evidence="5">
    <location>
        <begin position="210"/>
        <end position="213"/>
    </location>
</feature>
<feature type="strand" evidence="4">
    <location>
        <begin position="217"/>
        <end position="219"/>
    </location>
</feature>
<feature type="helix" evidence="5">
    <location>
        <begin position="222"/>
        <end position="229"/>
    </location>
</feature>
<feature type="helix" evidence="5">
    <location>
        <begin position="239"/>
        <end position="254"/>
    </location>
</feature>
<feature type="helix" evidence="5">
    <location>
        <begin position="260"/>
        <end position="271"/>
    </location>
</feature>
<keyword id="KW-0002">3D-structure</keyword>
<keyword id="KW-0028">Amino-acid biosynthesis</keyword>
<keyword id="KW-0057">Aromatic amino acid biosynthesis</keyword>
<keyword id="KW-0521">NADP</keyword>
<keyword id="KW-0560">Oxidoreductase</keyword>
<keyword id="KW-1185">Reference proteome</keyword>
<dbReference type="EC" id="1.1.1.25" evidence="1"/>
<dbReference type="EMBL" id="L42023">
    <property type="protein sequence ID" value="AAC22314.1"/>
    <property type="molecule type" value="Genomic_DNA"/>
</dbReference>
<dbReference type="PIR" id="H64084">
    <property type="entry name" value="H64084"/>
</dbReference>
<dbReference type="RefSeq" id="NP_438815.1">
    <property type="nucleotide sequence ID" value="NC_000907.1"/>
</dbReference>
<dbReference type="PDB" id="1P74">
    <property type="method" value="X-ray"/>
    <property type="resolution" value="2.40 A"/>
    <property type="chains" value="A/B=1-272"/>
</dbReference>
<dbReference type="PDB" id="1P77">
    <property type="method" value="X-ray"/>
    <property type="resolution" value="1.95 A"/>
    <property type="chains" value="A=1-272"/>
</dbReference>
<dbReference type="PDBsum" id="1P74"/>
<dbReference type="PDBsum" id="1P77"/>
<dbReference type="SMR" id="P43876"/>
<dbReference type="STRING" id="71421.HI_0655"/>
<dbReference type="DrugBank" id="DB02363">
    <property type="generic name" value="2'-Monophosphoadenosine-5'-Diphosphate"/>
</dbReference>
<dbReference type="EnsemblBacteria" id="AAC22314">
    <property type="protein sequence ID" value="AAC22314"/>
    <property type="gene ID" value="HI_0655"/>
</dbReference>
<dbReference type="KEGG" id="hin:HI_0655"/>
<dbReference type="PATRIC" id="fig|71421.8.peg.684"/>
<dbReference type="eggNOG" id="COG0169">
    <property type="taxonomic scope" value="Bacteria"/>
</dbReference>
<dbReference type="HOGENOM" id="CLU_044063_2_1_6"/>
<dbReference type="OrthoDB" id="9776868at2"/>
<dbReference type="PhylomeDB" id="P43876"/>
<dbReference type="BioCyc" id="HINF71421:G1GJ1-690-MONOMER"/>
<dbReference type="BRENDA" id="1.1.1.25">
    <property type="organism ID" value="2529"/>
</dbReference>
<dbReference type="SABIO-RK" id="P43876"/>
<dbReference type="UniPathway" id="UPA00053">
    <property type="reaction ID" value="UER00087"/>
</dbReference>
<dbReference type="EvolutionaryTrace" id="P43876"/>
<dbReference type="Proteomes" id="UP000000579">
    <property type="component" value="Chromosome"/>
</dbReference>
<dbReference type="GO" id="GO:0005829">
    <property type="term" value="C:cytosol"/>
    <property type="evidence" value="ECO:0000318"/>
    <property type="project" value="GO_Central"/>
</dbReference>
<dbReference type="GO" id="GO:0050661">
    <property type="term" value="F:NADP binding"/>
    <property type="evidence" value="ECO:0000318"/>
    <property type="project" value="GO_Central"/>
</dbReference>
<dbReference type="GO" id="GO:0004764">
    <property type="term" value="F:shikimate 3-dehydrogenase (NADP+) activity"/>
    <property type="evidence" value="ECO:0000318"/>
    <property type="project" value="GO_Central"/>
</dbReference>
<dbReference type="GO" id="GO:0008652">
    <property type="term" value="P:amino acid biosynthetic process"/>
    <property type="evidence" value="ECO:0007669"/>
    <property type="project" value="UniProtKB-KW"/>
</dbReference>
<dbReference type="GO" id="GO:0009073">
    <property type="term" value="P:aromatic amino acid family biosynthetic process"/>
    <property type="evidence" value="ECO:0007669"/>
    <property type="project" value="UniProtKB-KW"/>
</dbReference>
<dbReference type="GO" id="GO:0009423">
    <property type="term" value="P:chorismate biosynthetic process"/>
    <property type="evidence" value="ECO:0000318"/>
    <property type="project" value="GO_Central"/>
</dbReference>
<dbReference type="GO" id="GO:0019632">
    <property type="term" value="P:shikimate metabolic process"/>
    <property type="evidence" value="ECO:0000318"/>
    <property type="project" value="GO_Central"/>
</dbReference>
<dbReference type="CDD" id="cd01065">
    <property type="entry name" value="NAD_bind_Shikimate_DH"/>
    <property type="match status" value="1"/>
</dbReference>
<dbReference type="FunFam" id="3.40.50.10860:FF:000006">
    <property type="entry name" value="Shikimate dehydrogenase (NADP(+))"/>
    <property type="match status" value="1"/>
</dbReference>
<dbReference type="FunFam" id="3.40.50.720:FF:000965">
    <property type="entry name" value="Shikimate dehydrogenase (NADP(+))"/>
    <property type="match status" value="1"/>
</dbReference>
<dbReference type="Gene3D" id="3.40.50.10860">
    <property type="entry name" value="Leucine Dehydrogenase, chain A, domain 1"/>
    <property type="match status" value="1"/>
</dbReference>
<dbReference type="Gene3D" id="3.40.50.720">
    <property type="entry name" value="NAD(P)-binding Rossmann-like Domain"/>
    <property type="match status" value="1"/>
</dbReference>
<dbReference type="HAMAP" id="MF_00222">
    <property type="entry name" value="Shikimate_DH_AroE"/>
    <property type="match status" value="1"/>
</dbReference>
<dbReference type="InterPro" id="IPR046346">
    <property type="entry name" value="Aminoacid_DH-like_N_sf"/>
</dbReference>
<dbReference type="InterPro" id="IPR036291">
    <property type="entry name" value="NAD(P)-bd_dom_sf"/>
</dbReference>
<dbReference type="InterPro" id="IPR041121">
    <property type="entry name" value="SDH_C"/>
</dbReference>
<dbReference type="InterPro" id="IPR011342">
    <property type="entry name" value="Shikimate_DH"/>
</dbReference>
<dbReference type="InterPro" id="IPR013708">
    <property type="entry name" value="Shikimate_DH-bd_N"/>
</dbReference>
<dbReference type="InterPro" id="IPR022893">
    <property type="entry name" value="Shikimate_DH_fam"/>
</dbReference>
<dbReference type="InterPro" id="IPR006151">
    <property type="entry name" value="Shikm_DH/Glu-tRNA_Rdtase"/>
</dbReference>
<dbReference type="NCBIfam" id="TIGR00507">
    <property type="entry name" value="aroE"/>
    <property type="match status" value="1"/>
</dbReference>
<dbReference type="NCBIfam" id="NF001310">
    <property type="entry name" value="PRK00258.1-2"/>
    <property type="match status" value="1"/>
</dbReference>
<dbReference type="PANTHER" id="PTHR21089:SF1">
    <property type="entry name" value="BIFUNCTIONAL 3-DEHYDROQUINATE DEHYDRATASE_SHIKIMATE DEHYDROGENASE, CHLOROPLASTIC"/>
    <property type="match status" value="1"/>
</dbReference>
<dbReference type="PANTHER" id="PTHR21089">
    <property type="entry name" value="SHIKIMATE DEHYDROGENASE"/>
    <property type="match status" value="1"/>
</dbReference>
<dbReference type="Pfam" id="PF18317">
    <property type="entry name" value="SDH_C"/>
    <property type="match status" value="1"/>
</dbReference>
<dbReference type="Pfam" id="PF01488">
    <property type="entry name" value="Shikimate_DH"/>
    <property type="match status" value="1"/>
</dbReference>
<dbReference type="Pfam" id="PF08501">
    <property type="entry name" value="Shikimate_dh_N"/>
    <property type="match status" value="1"/>
</dbReference>
<dbReference type="SUPFAM" id="SSF53223">
    <property type="entry name" value="Aminoacid dehydrogenase-like, N-terminal domain"/>
    <property type="match status" value="1"/>
</dbReference>
<dbReference type="SUPFAM" id="SSF51735">
    <property type="entry name" value="NAD(P)-binding Rossmann-fold domains"/>
    <property type="match status" value="1"/>
</dbReference>
<protein>
    <recommendedName>
        <fullName evidence="1">Shikimate dehydrogenase (NADP(+))</fullName>
        <shortName evidence="1">SDH</shortName>
        <ecNumber evidence="1">1.1.1.25</ecNumber>
    </recommendedName>
</protein>